<sequence>MIEFKNVNKVFRKKRETIQALKNVSFKIDQHDIFGVIGYSGAGKSTLVRLVNQLETVSDGQVIVDGHEIDTYKEKDLRDIKKDIGMIFQHFNLLNSKSVYKNVAMPLILSKTNKKEIKEKVDEMLEFVGLADKKDQFPDELSGGQKQRVAIARALVTHPKILLCDEATSALDPATTSSILNLLSNVNRTFGVTIMMITHEMSVIQKICHRVAVMENGEVIEMGTVKDVFSHPQTNTAKNFVSTVINTEPSKELRASFNSRKDSNFTDYKLFLDSEQIQLPILNELINEHHLNVNVLFSSMSEIQDETVCYLWLRFEHDESFNDFKLTDYLSKRHIRYEEVI</sequence>
<comment type="function">
    <text evidence="1">Part of the ABC transporter complex MetNIQ involved in methionine import. Responsible for energy coupling to the transport system.</text>
</comment>
<comment type="catalytic activity">
    <reaction evidence="1">
        <text>L-methionine(out) + ATP + H2O = L-methionine(in) + ADP + phosphate + H(+)</text>
        <dbReference type="Rhea" id="RHEA:29779"/>
        <dbReference type="ChEBI" id="CHEBI:15377"/>
        <dbReference type="ChEBI" id="CHEBI:15378"/>
        <dbReference type="ChEBI" id="CHEBI:30616"/>
        <dbReference type="ChEBI" id="CHEBI:43474"/>
        <dbReference type="ChEBI" id="CHEBI:57844"/>
        <dbReference type="ChEBI" id="CHEBI:456216"/>
        <dbReference type="EC" id="7.4.2.11"/>
    </reaction>
</comment>
<comment type="catalytic activity">
    <reaction evidence="1">
        <text>D-methionine(out) + ATP + H2O = D-methionine(in) + ADP + phosphate + H(+)</text>
        <dbReference type="Rhea" id="RHEA:29767"/>
        <dbReference type="ChEBI" id="CHEBI:15377"/>
        <dbReference type="ChEBI" id="CHEBI:15378"/>
        <dbReference type="ChEBI" id="CHEBI:30616"/>
        <dbReference type="ChEBI" id="CHEBI:43474"/>
        <dbReference type="ChEBI" id="CHEBI:57932"/>
        <dbReference type="ChEBI" id="CHEBI:456216"/>
        <dbReference type="EC" id="7.4.2.11"/>
    </reaction>
</comment>
<comment type="subunit">
    <text evidence="1">The complex is composed of two ATP-binding proteins (MetN), two transmembrane proteins (MetI) and a solute-binding protein (MetQ).</text>
</comment>
<comment type="subcellular location">
    <subcellularLocation>
        <location evidence="1">Cell membrane</location>
        <topology evidence="1">Peripheral membrane protein</topology>
    </subcellularLocation>
</comment>
<comment type="similarity">
    <text evidence="1">Belongs to the ABC transporter superfamily. Methionine importer (TC 3.A.1.24) family.</text>
</comment>
<evidence type="ECO:0000255" key="1">
    <source>
        <dbReference type="HAMAP-Rule" id="MF_01719"/>
    </source>
</evidence>
<protein>
    <recommendedName>
        <fullName evidence="1">Methionine import ATP-binding protein MetN 2</fullName>
        <ecNumber evidence="1">7.4.2.11</ecNumber>
    </recommendedName>
</protein>
<organism>
    <name type="scientific">Staphylococcus epidermidis (strain ATCC 12228 / FDA PCI 1200)</name>
    <dbReference type="NCBI Taxonomy" id="176280"/>
    <lineage>
        <taxon>Bacteria</taxon>
        <taxon>Bacillati</taxon>
        <taxon>Bacillota</taxon>
        <taxon>Bacilli</taxon>
        <taxon>Bacillales</taxon>
        <taxon>Staphylococcaceae</taxon>
        <taxon>Staphylococcus</taxon>
    </lineage>
</organism>
<proteinExistence type="inferred from homology"/>
<gene>
    <name evidence="1" type="primary">metN2</name>
    <name type="ordered locus">SE_2322</name>
</gene>
<accession>Q8CQS7</accession>
<reference key="1">
    <citation type="journal article" date="2003" name="Mol. Microbiol.">
        <title>Genome-based analysis of virulence genes in a non-biofilm-forming Staphylococcus epidermidis strain (ATCC 12228).</title>
        <authorList>
            <person name="Zhang Y.-Q."/>
            <person name="Ren S.-X."/>
            <person name="Li H.-L."/>
            <person name="Wang Y.-X."/>
            <person name="Fu G."/>
            <person name="Yang J."/>
            <person name="Qin Z.-Q."/>
            <person name="Miao Y.-G."/>
            <person name="Wang W.-Y."/>
            <person name="Chen R.-S."/>
            <person name="Shen Y."/>
            <person name="Chen Z."/>
            <person name="Yuan Z.-H."/>
            <person name="Zhao G.-P."/>
            <person name="Qu D."/>
            <person name="Danchin A."/>
            <person name="Wen Y.-M."/>
        </authorList>
    </citation>
    <scope>NUCLEOTIDE SEQUENCE [LARGE SCALE GENOMIC DNA]</scope>
    <source>
        <strain>ATCC 12228 / FDA PCI 1200</strain>
    </source>
</reference>
<keyword id="KW-0029">Amino-acid transport</keyword>
<keyword id="KW-0067">ATP-binding</keyword>
<keyword id="KW-1003">Cell membrane</keyword>
<keyword id="KW-0472">Membrane</keyword>
<keyword id="KW-0547">Nucleotide-binding</keyword>
<keyword id="KW-1278">Translocase</keyword>
<keyword id="KW-0813">Transport</keyword>
<dbReference type="EC" id="7.4.2.11" evidence="1"/>
<dbReference type="EMBL" id="AE015929">
    <property type="protein sequence ID" value="AAO05964.1"/>
    <property type="molecule type" value="Genomic_DNA"/>
</dbReference>
<dbReference type="RefSeq" id="NP_765877.1">
    <property type="nucleotide sequence ID" value="NC_004461.1"/>
</dbReference>
<dbReference type="RefSeq" id="WP_001832450.1">
    <property type="nucleotide sequence ID" value="NZ_WBME01000004.1"/>
</dbReference>
<dbReference type="SMR" id="Q8CQS7"/>
<dbReference type="KEGG" id="sep:SE_2322"/>
<dbReference type="PATRIC" id="fig|176280.10.peg.2265"/>
<dbReference type="eggNOG" id="COG1135">
    <property type="taxonomic scope" value="Bacteria"/>
</dbReference>
<dbReference type="HOGENOM" id="CLU_000604_1_3_9"/>
<dbReference type="OrthoDB" id="9802264at2"/>
<dbReference type="Proteomes" id="UP000001411">
    <property type="component" value="Chromosome"/>
</dbReference>
<dbReference type="GO" id="GO:0005886">
    <property type="term" value="C:plasma membrane"/>
    <property type="evidence" value="ECO:0007669"/>
    <property type="project" value="UniProtKB-SubCell"/>
</dbReference>
<dbReference type="GO" id="GO:0033232">
    <property type="term" value="F:ABC-type D-methionine transporter activity"/>
    <property type="evidence" value="ECO:0007669"/>
    <property type="project" value="UniProtKB-EC"/>
</dbReference>
<dbReference type="GO" id="GO:0005524">
    <property type="term" value="F:ATP binding"/>
    <property type="evidence" value="ECO:0007669"/>
    <property type="project" value="UniProtKB-KW"/>
</dbReference>
<dbReference type="GO" id="GO:0016887">
    <property type="term" value="F:ATP hydrolysis activity"/>
    <property type="evidence" value="ECO:0007669"/>
    <property type="project" value="InterPro"/>
</dbReference>
<dbReference type="CDD" id="cd03258">
    <property type="entry name" value="ABC_MetN_methionine_transporter"/>
    <property type="match status" value="1"/>
</dbReference>
<dbReference type="FunFam" id="3.40.50.300:FF:000056">
    <property type="entry name" value="Cell division ATP-binding protein FtsE"/>
    <property type="match status" value="1"/>
</dbReference>
<dbReference type="Gene3D" id="3.30.70.260">
    <property type="match status" value="1"/>
</dbReference>
<dbReference type="Gene3D" id="3.40.50.300">
    <property type="entry name" value="P-loop containing nucleotide triphosphate hydrolases"/>
    <property type="match status" value="1"/>
</dbReference>
<dbReference type="InterPro" id="IPR003593">
    <property type="entry name" value="AAA+_ATPase"/>
</dbReference>
<dbReference type="InterPro" id="IPR003439">
    <property type="entry name" value="ABC_transporter-like_ATP-bd"/>
</dbReference>
<dbReference type="InterPro" id="IPR017871">
    <property type="entry name" value="ABC_transporter-like_CS"/>
</dbReference>
<dbReference type="InterPro" id="IPR045865">
    <property type="entry name" value="ACT-like_dom_sf"/>
</dbReference>
<dbReference type="InterPro" id="IPR041701">
    <property type="entry name" value="MetN_ABC"/>
</dbReference>
<dbReference type="InterPro" id="IPR050086">
    <property type="entry name" value="MetN_ABC_transporter-like"/>
</dbReference>
<dbReference type="InterPro" id="IPR018449">
    <property type="entry name" value="NIL_domain"/>
</dbReference>
<dbReference type="InterPro" id="IPR027417">
    <property type="entry name" value="P-loop_NTPase"/>
</dbReference>
<dbReference type="PANTHER" id="PTHR43166">
    <property type="entry name" value="AMINO ACID IMPORT ATP-BINDING PROTEIN"/>
    <property type="match status" value="1"/>
</dbReference>
<dbReference type="PANTHER" id="PTHR43166:SF30">
    <property type="entry name" value="METHIONINE IMPORT ATP-BINDING PROTEIN METN"/>
    <property type="match status" value="1"/>
</dbReference>
<dbReference type="Pfam" id="PF00005">
    <property type="entry name" value="ABC_tran"/>
    <property type="match status" value="1"/>
</dbReference>
<dbReference type="Pfam" id="PF09383">
    <property type="entry name" value="NIL"/>
    <property type="match status" value="1"/>
</dbReference>
<dbReference type="SMART" id="SM00382">
    <property type="entry name" value="AAA"/>
    <property type="match status" value="1"/>
</dbReference>
<dbReference type="SMART" id="SM00930">
    <property type="entry name" value="NIL"/>
    <property type="match status" value="1"/>
</dbReference>
<dbReference type="SUPFAM" id="SSF55021">
    <property type="entry name" value="ACT-like"/>
    <property type="match status" value="1"/>
</dbReference>
<dbReference type="SUPFAM" id="SSF52540">
    <property type="entry name" value="P-loop containing nucleoside triphosphate hydrolases"/>
    <property type="match status" value="1"/>
</dbReference>
<dbReference type="PROSITE" id="PS00211">
    <property type="entry name" value="ABC_TRANSPORTER_1"/>
    <property type="match status" value="1"/>
</dbReference>
<dbReference type="PROSITE" id="PS50893">
    <property type="entry name" value="ABC_TRANSPORTER_2"/>
    <property type="match status" value="1"/>
</dbReference>
<dbReference type="PROSITE" id="PS51264">
    <property type="entry name" value="METN"/>
    <property type="match status" value="1"/>
</dbReference>
<name>METN2_STAES</name>
<feature type="chain" id="PRO_0000270406" description="Methionine import ATP-binding protein MetN 2">
    <location>
        <begin position="1"/>
        <end position="341"/>
    </location>
</feature>
<feature type="domain" description="ABC transporter" evidence="1">
    <location>
        <begin position="2"/>
        <end position="241"/>
    </location>
</feature>
<feature type="binding site" evidence="1">
    <location>
        <begin position="38"/>
        <end position="45"/>
    </location>
    <ligand>
        <name>ATP</name>
        <dbReference type="ChEBI" id="CHEBI:30616"/>
    </ligand>
</feature>